<name>TRUA_METJA</name>
<organism>
    <name type="scientific">Methanocaldococcus jannaschii (strain ATCC 43067 / DSM 2661 / JAL-1 / JCM 10045 / NBRC 100440)</name>
    <name type="common">Methanococcus jannaschii</name>
    <dbReference type="NCBI Taxonomy" id="243232"/>
    <lineage>
        <taxon>Archaea</taxon>
        <taxon>Methanobacteriati</taxon>
        <taxon>Methanobacteriota</taxon>
        <taxon>Methanomada group</taxon>
        <taxon>Methanococci</taxon>
        <taxon>Methanococcales</taxon>
        <taxon>Methanocaldococcaceae</taxon>
        <taxon>Methanocaldococcus</taxon>
    </lineage>
</organism>
<feature type="chain" id="PRO_0000057503" description="tRNA pseudouridine synthase A">
    <location>
        <begin position="1"/>
        <end position="259"/>
    </location>
</feature>
<feature type="active site" description="Nucleophile" evidence="1">
    <location>
        <position position="50"/>
    </location>
</feature>
<feature type="binding site" evidence="1">
    <location>
        <position position="101"/>
    </location>
    <ligand>
        <name>substrate</name>
    </ligand>
</feature>
<accession>Q59069</accession>
<reference key="1">
    <citation type="journal article" date="1996" name="Science">
        <title>Complete genome sequence of the methanogenic archaeon, Methanococcus jannaschii.</title>
        <authorList>
            <person name="Bult C.J."/>
            <person name="White O."/>
            <person name="Olsen G.J."/>
            <person name="Zhou L."/>
            <person name="Fleischmann R.D."/>
            <person name="Sutton G.G."/>
            <person name="Blake J.A."/>
            <person name="FitzGerald L.M."/>
            <person name="Clayton R.A."/>
            <person name="Gocayne J.D."/>
            <person name="Kerlavage A.R."/>
            <person name="Dougherty B.A."/>
            <person name="Tomb J.-F."/>
            <person name="Adams M.D."/>
            <person name="Reich C.I."/>
            <person name="Overbeek R."/>
            <person name="Kirkness E.F."/>
            <person name="Weinstock K.G."/>
            <person name="Merrick J.M."/>
            <person name="Glodek A."/>
            <person name="Scott J.L."/>
            <person name="Geoghagen N.S.M."/>
            <person name="Weidman J.F."/>
            <person name="Fuhrmann J.L."/>
            <person name="Nguyen D."/>
            <person name="Utterback T.R."/>
            <person name="Kelley J.M."/>
            <person name="Peterson J.D."/>
            <person name="Sadow P.W."/>
            <person name="Hanna M.C."/>
            <person name="Cotton M.D."/>
            <person name="Roberts K.M."/>
            <person name="Hurst M.A."/>
            <person name="Kaine B.P."/>
            <person name="Borodovsky M."/>
            <person name="Klenk H.-P."/>
            <person name="Fraser C.M."/>
            <person name="Smith H.O."/>
            <person name="Woese C.R."/>
            <person name="Venter J.C."/>
        </authorList>
    </citation>
    <scope>NUCLEOTIDE SEQUENCE [LARGE SCALE GENOMIC DNA]</scope>
    <source>
        <strain>ATCC 43067 / DSM 2661 / JAL-1 / JCM 10045 / NBRC 100440</strain>
    </source>
</reference>
<protein>
    <recommendedName>
        <fullName evidence="1">tRNA pseudouridine synthase A</fullName>
        <ecNumber evidence="1">5.4.99.12</ecNumber>
    </recommendedName>
    <alternativeName>
        <fullName evidence="1">tRNA pseudouridine(38-40) synthase</fullName>
    </alternativeName>
    <alternativeName>
        <fullName evidence="1">tRNA pseudouridylate synthase I</fullName>
    </alternativeName>
    <alternativeName>
        <fullName evidence="1">tRNA-uridine isomerase I</fullName>
    </alternativeName>
</protein>
<gene>
    <name evidence="1" type="primary">truA</name>
    <name type="ordered locus">MJ1675</name>
</gene>
<dbReference type="EC" id="5.4.99.12" evidence="1"/>
<dbReference type="EMBL" id="L77117">
    <property type="protein sequence ID" value="AAB99697.1"/>
    <property type="molecule type" value="Genomic_DNA"/>
</dbReference>
<dbReference type="PIR" id="A64509">
    <property type="entry name" value="A64509"/>
</dbReference>
<dbReference type="RefSeq" id="WP_010871199.1">
    <property type="nucleotide sequence ID" value="NC_000909.1"/>
</dbReference>
<dbReference type="SMR" id="Q59069"/>
<dbReference type="FunCoup" id="Q59069">
    <property type="interactions" value="203"/>
</dbReference>
<dbReference type="STRING" id="243232.MJ_1675"/>
<dbReference type="PaxDb" id="243232-MJ_1675"/>
<dbReference type="EnsemblBacteria" id="AAB99697">
    <property type="protein sequence ID" value="AAB99697"/>
    <property type="gene ID" value="MJ_1675"/>
</dbReference>
<dbReference type="GeneID" id="1452584"/>
<dbReference type="KEGG" id="mja:MJ_1675"/>
<dbReference type="eggNOG" id="arCOG04449">
    <property type="taxonomic scope" value="Archaea"/>
</dbReference>
<dbReference type="HOGENOM" id="CLU_014673_4_2_2"/>
<dbReference type="InParanoid" id="Q59069"/>
<dbReference type="OrthoDB" id="25720at2157"/>
<dbReference type="PhylomeDB" id="Q59069"/>
<dbReference type="Proteomes" id="UP000000805">
    <property type="component" value="Chromosome"/>
</dbReference>
<dbReference type="GO" id="GO:0009982">
    <property type="term" value="F:pseudouridine synthase activity"/>
    <property type="evidence" value="ECO:0000318"/>
    <property type="project" value="GO_Central"/>
</dbReference>
<dbReference type="GO" id="GO:0003723">
    <property type="term" value="F:RNA binding"/>
    <property type="evidence" value="ECO:0007669"/>
    <property type="project" value="InterPro"/>
</dbReference>
<dbReference type="GO" id="GO:0160147">
    <property type="term" value="F:tRNA pseudouridine(38-40) synthase activity"/>
    <property type="evidence" value="ECO:0007669"/>
    <property type="project" value="UniProtKB-EC"/>
</dbReference>
<dbReference type="GO" id="GO:0031119">
    <property type="term" value="P:tRNA pseudouridine synthesis"/>
    <property type="evidence" value="ECO:0000318"/>
    <property type="project" value="GO_Central"/>
</dbReference>
<dbReference type="CDD" id="cd02866">
    <property type="entry name" value="PseudoU_synth_TruA_Archea"/>
    <property type="match status" value="1"/>
</dbReference>
<dbReference type="FunFam" id="3.30.70.580:FF:000032">
    <property type="entry name" value="tRNA pseudouridine synthase"/>
    <property type="match status" value="1"/>
</dbReference>
<dbReference type="FunFam" id="3.30.70.660:FF:000036">
    <property type="entry name" value="tRNA pseudouridine synthase A"/>
    <property type="match status" value="1"/>
</dbReference>
<dbReference type="Gene3D" id="3.30.70.660">
    <property type="entry name" value="Pseudouridine synthase I, catalytic domain, C-terminal subdomain"/>
    <property type="match status" value="1"/>
</dbReference>
<dbReference type="Gene3D" id="3.30.70.580">
    <property type="entry name" value="Pseudouridine synthase I, catalytic domain, N-terminal subdomain"/>
    <property type="match status" value="1"/>
</dbReference>
<dbReference type="HAMAP" id="MF_00171">
    <property type="entry name" value="TruA"/>
    <property type="match status" value="1"/>
</dbReference>
<dbReference type="InterPro" id="IPR020103">
    <property type="entry name" value="PsdUridine_synth_cat_dom_sf"/>
</dbReference>
<dbReference type="InterPro" id="IPR001406">
    <property type="entry name" value="PsdUridine_synth_TruA"/>
</dbReference>
<dbReference type="InterPro" id="IPR020097">
    <property type="entry name" value="PsdUridine_synth_TruA_a/b_dom"/>
</dbReference>
<dbReference type="InterPro" id="IPR020095">
    <property type="entry name" value="PsdUridine_synth_TruA_C"/>
</dbReference>
<dbReference type="InterPro" id="IPR020094">
    <property type="entry name" value="TruA/RsuA/RluB/E/F_N"/>
</dbReference>
<dbReference type="NCBIfam" id="TIGR00071">
    <property type="entry name" value="hisT_truA"/>
    <property type="match status" value="1"/>
</dbReference>
<dbReference type="PANTHER" id="PTHR11142">
    <property type="entry name" value="PSEUDOURIDYLATE SYNTHASE"/>
    <property type="match status" value="1"/>
</dbReference>
<dbReference type="PANTHER" id="PTHR11142:SF0">
    <property type="entry name" value="TRNA PSEUDOURIDINE SYNTHASE-LIKE 1"/>
    <property type="match status" value="1"/>
</dbReference>
<dbReference type="Pfam" id="PF01416">
    <property type="entry name" value="PseudoU_synth_1"/>
    <property type="match status" value="1"/>
</dbReference>
<dbReference type="PIRSF" id="PIRSF001430">
    <property type="entry name" value="tRNA_psdUrid_synth"/>
    <property type="match status" value="1"/>
</dbReference>
<dbReference type="SUPFAM" id="SSF55120">
    <property type="entry name" value="Pseudouridine synthase"/>
    <property type="match status" value="1"/>
</dbReference>
<evidence type="ECO:0000255" key="1">
    <source>
        <dbReference type="HAMAP-Rule" id="MF_00171"/>
    </source>
</evidence>
<keyword id="KW-0413">Isomerase</keyword>
<keyword id="KW-1185">Reference proteome</keyword>
<keyword id="KW-0819">tRNA processing</keyword>
<sequence>MYILKIAYDGRYSFQQQPHKQTVCDILLDALEETGFLAKKKVIYSGGRTDKGVSALGNFVVVELKKEPILSYINAKLKDKGIWVLGYREIDEIPKVKYRHYRYILPNIGYDVDAIKEGAKKMIGTHSFHNLSKRDRTKEKSPIRTIYDIKISENEFYLTVDIIGESFLWNMVRKIVGALDLVGRGKKPVEWIDKLLDENHREGVPTFPPEGLILVEAKVDIEYIYDNYSIRKFKEYWGEFFKLQVMKIGIAKTVLEFTK</sequence>
<comment type="function">
    <text evidence="1">Formation of pseudouridine at positions 38, 39 and 40 in the anticodon stem and loop of transfer RNAs.</text>
</comment>
<comment type="catalytic activity">
    <reaction evidence="1">
        <text>uridine(38/39/40) in tRNA = pseudouridine(38/39/40) in tRNA</text>
        <dbReference type="Rhea" id="RHEA:22376"/>
        <dbReference type="Rhea" id="RHEA-COMP:10085"/>
        <dbReference type="Rhea" id="RHEA-COMP:10087"/>
        <dbReference type="ChEBI" id="CHEBI:65314"/>
        <dbReference type="ChEBI" id="CHEBI:65315"/>
        <dbReference type="EC" id="5.4.99.12"/>
    </reaction>
</comment>
<comment type="similarity">
    <text evidence="1">Belongs to the tRNA pseudouridine synthase TruA family.</text>
</comment>
<proteinExistence type="inferred from homology"/>